<gene>
    <name evidence="8" type="primary">GPD1L</name>
    <name type="synonym">KIAA0089</name>
</gene>
<accession>Q8N335</accession>
<accession>A8K9U3</accession>
<accession>Q14702</accession>
<accession>Q9BRM5</accession>
<proteinExistence type="evidence at protein level"/>
<protein>
    <recommendedName>
        <fullName>Glycerol-3-phosphate dehydrogenase 1-like protein</fullName>
        <shortName>GPD1-L</shortName>
        <ecNumber evidence="4">1.1.1.8</ecNumber>
    </recommendedName>
</protein>
<sequence>MAAAPLKVCIVGSGNWGSAVAKIIGNNVKKLQKFASTVKMWVFEETVNGRKLTDIINNDHENVKYLPGHKLPENVVAMSNLSEAVQDADLLVFVIPHQFIHRICDEITGRVPKKALGITLIKGIDEGPEGLKLISDIIREKMGIDISVLMGANIANEVAAEKFCETTIGSKVMENGLLFKELLQTPNFRITVVDDADTVELCGALKNIVAVGAGFCDGLRCGDNTKAAVIRLGLMEMIAFARIFCKGQVSTATFLESCGVADLITTCYGGRNRRVAEAFARTGKTIEELEKEMLNGQKLQGPQTSAEVYRILKQKGLLDKFPLFTAVYQICYESRPVQEMLSCLQSHPEHT</sequence>
<evidence type="ECO:0000250" key="1"/>
<evidence type="ECO:0000269" key="2">
    <source>
    </source>
</evidence>
<evidence type="ECO:0000269" key="3">
    <source>
    </source>
</evidence>
<evidence type="ECO:0000269" key="4">
    <source>
    </source>
</evidence>
<evidence type="ECO:0000269" key="5">
    <source>
    </source>
</evidence>
<evidence type="ECO:0000269" key="6">
    <source ref="8"/>
</evidence>
<evidence type="ECO:0000305" key="7"/>
<evidence type="ECO:0000312" key="8">
    <source>
        <dbReference type="HGNC" id="HGNC:28956"/>
    </source>
</evidence>
<evidence type="ECO:0007829" key="9">
    <source>
        <dbReference type="PDB" id="2PLA"/>
    </source>
</evidence>
<reference key="1">
    <citation type="journal article" date="1995" name="DNA Res.">
        <title>Prediction of the coding sequences of unidentified human genes. III. The coding sequences of 40 new genes (KIAA0081-KIAA0120) deduced by analysis of cDNA clones from human cell line KG-1.</title>
        <authorList>
            <person name="Nagase T."/>
            <person name="Miyajima N."/>
            <person name="Tanaka A."/>
            <person name="Sazuka T."/>
            <person name="Seki N."/>
            <person name="Sato S."/>
            <person name="Tabata S."/>
            <person name="Ishikawa K."/>
            <person name="Kawarabayasi Y."/>
            <person name="Kotani H."/>
            <person name="Nomura N."/>
        </authorList>
    </citation>
    <scope>NUCLEOTIDE SEQUENCE [LARGE SCALE MRNA]</scope>
    <source>
        <tissue>Bone marrow</tissue>
    </source>
</reference>
<reference key="2">
    <citation type="journal article" date="2004" name="Nat. Genet.">
        <title>Complete sequencing and characterization of 21,243 full-length human cDNAs.</title>
        <authorList>
            <person name="Ota T."/>
            <person name="Suzuki Y."/>
            <person name="Nishikawa T."/>
            <person name="Otsuki T."/>
            <person name="Sugiyama T."/>
            <person name="Irie R."/>
            <person name="Wakamatsu A."/>
            <person name="Hayashi K."/>
            <person name="Sato H."/>
            <person name="Nagai K."/>
            <person name="Kimura K."/>
            <person name="Makita H."/>
            <person name="Sekine M."/>
            <person name="Obayashi M."/>
            <person name="Nishi T."/>
            <person name="Shibahara T."/>
            <person name="Tanaka T."/>
            <person name="Ishii S."/>
            <person name="Yamamoto J."/>
            <person name="Saito K."/>
            <person name="Kawai Y."/>
            <person name="Isono Y."/>
            <person name="Nakamura Y."/>
            <person name="Nagahari K."/>
            <person name="Murakami K."/>
            <person name="Yasuda T."/>
            <person name="Iwayanagi T."/>
            <person name="Wagatsuma M."/>
            <person name="Shiratori A."/>
            <person name="Sudo H."/>
            <person name="Hosoiri T."/>
            <person name="Kaku Y."/>
            <person name="Kodaira H."/>
            <person name="Kondo H."/>
            <person name="Sugawara M."/>
            <person name="Takahashi M."/>
            <person name="Kanda K."/>
            <person name="Yokoi T."/>
            <person name="Furuya T."/>
            <person name="Kikkawa E."/>
            <person name="Omura Y."/>
            <person name="Abe K."/>
            <person name="Kamihara K."/>
            <person name="Katsuta N."/>
            <person name="Sato K."/>
            <person name="Tanikawa M."/>
            <person name="Yamazaki M."/>
            <person name="Ninomiya K."/>
            <person name="Ishibashi T."/>
            <person name="Yamashita H."/>
            <person name="Murakawa K."/>
            <person name="Fujimori K."/>
            <person name="Tanai H."/>
            <person name="Kimata M."/>
            <person name="Watanabe M."/>
            <person name="Hiraoka S."/>
            <person name="Chiba Y."/>
            <person name="Ishida S."/>
            <person name="Ono Y."/>
            <person name="Takiguchi S."/>
            <person name="Watanabe S."/>
            <person name="Yosida M."/>
            <person name="Hotuta T."/>
            <person name="Kusano J."/>
            <person name="Kanehori K."/>
            <person name="Takahashi-Fujii A."/>
            <person name="Hara H."/>
            <person name="Tanase T.-O."/>
            <person name="Nomura Y."/>
            <person name="Togiya S."/>
            <person name="Komai F."/>
            <person name="Hara R."/>
            <person name="Takeuchi K."/>
            <person name="Arita M."/>
            <person name="Imose N."/>
            <person name="Musashino K."/>
            <person name="Yuuki H."/>
            <person name="Oshima A."/>
            <person name="Sasaki N."/>
            <person name="Aotsuka S."/>
            <person name="Yoshikawa Y."/>
            <person name="Matsunawa H."/>
            <person name="Ichihara T."/>
            <person name="Shiohata N."/>
            <person name="Sano S."/>
            <person name="Moriya S."/>
            <person name="Momiyama H."/>
            <person name="Satoh N."/>
            <person name="Takami S."/>
            <person name="Terashima Y."/>
            <person name="Suzuki O."/>
            <person name="Nakagawa S."/>
            <person name="Senoh A."/>
            <person name="Mizoguchi H."/>
            <person name="Goto Y."/>
            <person name="Shimizu F."/>
            <person name="Wakebe H."/>
            <person name="Hishigaki H."/>
            <person name="Watanabe T."/>
            <person name="Sugiyama A."/>
            <person name="Takemoto M."/>
            <person name="Kawakami B."/>
            <person name="Yamazaki M."/>
            <person name="Watanabe K."/>
            <person name="Kumagai A."/>
            <person name="Itakura S."/>
            <person name="Fukuzumi Y."/>
            <person name="Fujimori Y."/>
            <person name="Komiyama M."/>
            <person name="Tashiro H."/>
            <person name="Tanigami A."/>
            <person name="Fujiwara T."/>
            <person name="Ono T."/>
            <person name="Yamada K."/>
            <person name="Fujii Y."/>
            <person name="Ozaki K."/>
            <person name="Hirao M."/>
            <person name="Ohmori Y."/>
            <person name="Kawabata A."/>
            <person name="Hikiji T."/>
            <person name="Kobatake N."/>
            <person name="Inagaki H."/>
            <person name="Ikema Y."/>
            <person name="Okamoto S."/>
            <person name="Okitani R."/>
            <person name="Kawakami T."/>
            <person name="Noguchi S."/>
            <person name="Itoh T."/>
            <person name="Shigeta K."/>
            <person name="Senba T."/>
            <person name="Matsumura K."/>
            <person name="Nakajima Y."/>
            <person name="Mizuno T."/>
            <person name="Morinaga M."/>
            <person name="Sasaki M."/>
            <person name="Togashi T."/>
            <person name="Oyama M."/>
            <person name="Hata H."/>
            <person name="Watanabe M."/>
            <person name="Komatsu T."/>
            <person name="Mizushima-Sugano J."/>
            <person name="Satoh T."/>
            <person name="Shirai Y."/>
            <person name="Takahashi Y."/>
            <person name="Nakagawa K."/>
            <person name="Okumura K."/>
            <person name="Nagase T."/>
            <person name="Nomura N."/>
            <person name="Kikuchi H."/>
            <person name="Masuho Y."/>
            <person name="Yamashita R."/>
            <person name="Nakai K."/>
            <person name="Yada T."/>
            <person name="Nakamura Y."/>
            <person name="Ohara O."/>
            <person name="Isogai T."/>
            <person name="Sugano S."/>
        </authorList>
    </citation>
    <scope>NUCLEOTIDE SEQUENCE [LARGE SCALE MRNA]</scope>
</reference>
<reference key="3">
    <citation type="submission" date="2005-07" db="EMBL/GenBank/DDBJ databases">
        <authorList>
            <person name="Mural R.J."/>
            <person name="Istrail S."/>
            <person name="Sutton G.G."/>
            <person name="Florea L."/>
            <person name="Halpern A.L."/>
            <person name="Mobarry C.M."/>
            <person name="Lippert R."/>
            <person name="Walenz B."/>
            <person name="Shatkay H."/>
            <person name="Dew I."/>
            <person name="Miller J.R."/>
            <person name="Flanigan M.J."/>
            <person name="Edwards N.J."/>
            <person name="Bolanos R."/>
            <person name="Fasulo D."/>
            <person name="Halldorsson B.V."/>
            <person name="Hannenhalli S."/>
            <person name="Turner R."/>
            <person name="Yooseph S."/>
            <person name="Lu F."/>
            <person name="Nusskern D.R."/>
            <person name="Shue B.C."/>
            <person name="Zheng X.H."/>
            <person name="Zhong F."/>
            <person name="Delcher A.L."/>
            <person name="Huson D.H."/>
            <person name="Kravitz S.A."/>
            <person name="Mouchard L."/>
            <person name="Reinert K."/>
            <person name="Remington K.A."/>
            <person name="Clark A.G."/>
            <person name="Waterman M.S."/>
            <person name="Eichler E.E."/>
            <person name="Adams M.D."/>
            <person name="Hunkapiller M.W."/>
            <person name="Myers E.W."/>
            <person name="Venter J.C."/>
        </authorList>
    </citation>
    <scope>NUCLEOTIDE SEQUENCE [LARGE SCALE GENOMIC DNA]</scope>
</reference>
<reference key="4">
    <citation type="journal article" date="2004" name="Genome Res.">
        <title>The status, quality, and expansion of the NIH full-length cDNA project: the Mammalian Gene Collection (MGC).</title>
        <authorList>
            <consortium name="The MGC Project Team"/>
        </authorList>
    </citation>
    <scope>NUCLEOTIDE SEQUENCE [LARGE SCALE MRNA]</scope>
    <source>
        <tissue>Brain</tissue>
        <tissue>Placenta</tissue>
    </source>
</reference>
<reference key="5">
    <citation type="journal article" date="2009" name="Am. J. Physiol.">
        <title>GPD1L links redox state to cardiac excitability by PKC-dependent phosphorylation of the sodium channel SCN5A.</title>
        <authorList>
            <person name="Valdivia C.R."/>
            <person name="Ueda K."/>
            <person name="Ackerman M.J."/>
            <person name="Makielski J.C."/>
        </authorList>
    </citation>
    <scope>FUNCTION</scope>
    <scope>CHARACTERIZATION OF VARIANTS BRGDA2 LYS-83 AND VAL-280</scope>
    <scope>INTERACTION WITH SCN5A</scope>
    <scope>CATALYTIC ACTIVITY</scope>
</reference>
<reference key="6">
    <citation type="journal article" date="2009" name="Circ. Res.">
        <title>Cardiac Na+ current regulation by pyridine nucleotides.</title>
        <authorList>
            <person name="Liu M."/>
            <person name="Sanyal S."/>
            <person name="Gao G."/>
            <person name="Gurung I.S."/>
            <person name="Zhu X."/>
            <person name="Gaconnet G."/>
            <person name="Kerchner L.J."/>
            <person name="Shang L.L."/>
            <person name="Huang C.L."/>
            <person name="Grace A."/>
            <person name="London B."/>
            <person name="Dudley S.C. Jr."/>
        </authorList>
    </citation>
    <scope>FUNCTION</scope>
    <scope>CHARACTERIZATION OF VARIANT BRGDA2 VAL-280</scope>
</reference>
<reference key="7">
    <citation type="journal article" date="2011" name="BMC Syst. Biol.">
        <title>Initial characterization of the human central proteome.</title>
        <authorList>
            <person name="Burkard T.R."/>
            <person name="Planyavsky M."/>
            <person name="Kaupe I."/>
            <person name="Breitwieser F.P."/>
            <person name="Buerckstuemmer T."/>
            <person name="Bennett K.L."/>
            <person name="Superti-Furga G."/>
            <person name="Colinge J."/>
        </authorList>
    </citation>
    <scope>IDENTIFICATION BY MASS SPECTROMETRY [LARGE SCALE ANALYSIS]</scope>
</reference>
<reference key="8">
    <citation type="submission" date="2007-05" db="PDB data bank">
        <title>Crystal structure of human glycerol-3-phosphate dehydrogenase 1-like protein.</title>
        <authorList>
            <consortium name="Structural genomics consortium (SGC)"/>
        </authorList>
    </citation>
    <scope>X-RAY CRYSTALLOGRAPHY (2.51 ANGSTROMS) OF 1-349 IN COMPLEX WITH NAD AND PHOSPHATE IONS</scope>
</reference>
<reference key="9">
    <citation type="journal article" date="2007" name="Circulation">
        <title>Molecular and functional characterization of novel glycerol-3-phosphate dehydrogenase 1 like gene (GPD1-L) mutations in sudden infant death syndrome.</title>
        <authorList>
            <person name="Van Norstrand D.W."/>
            <person name="Valdivia C.R."/>
            <person name="Tester D.J."/>
            <person name="Ueda K."/>
            <person name="London B."/>
            <person name="Makielski J.C."/>
            <person name="Ackerman M.J."/>
        </authorList>
    </citation>
    <scope>VARIANTS BRGDA2 LYS-83; VAL-124 AND CYS-273</scope>
    <scope>CHARACTERIZATION OF VARIANTS BRGDA2 LYS-83; VAL-124 AND CYS-273</scope>
</reference>
<reference key="10">
    <citation type="journal article" date="2007" name="Circulation">
        <title>Mutation in glycerol-3-phosphate dehydrogenase 1 like gene (GPD1-L) decreases cardiac Na+ current and causes inherited arrhythmias.</title>
        <authorList>
            <person name="London B."/>
            <person name="Michalec M."/>
            <person name="Mehdi H."/>
            <person name="Zhu X."/>
            <person name="Kerchner L."/>
            <person name="Sanyal S."/>
            <person name="Viswanathan P.C."/>
            <person name="Pfahnl A.E."/>
            <person name="Shang L.L."/>
            <person name="Madhusudanan M."/>
            <person name="Baty C.J."/>
            <person name="Lagana S."/>
            <person name="Aleong R."/>
            <person name="Gutmann R."/>
            <person name="Ackerman M.J."/>
            <person name="McNamara D.M."/>
            <person name="Weiss R."/>
            <person name="Dudley S.C. Jr."/>
        </authorList>
    </citation>
    <scope>TISSUE SPECIFICITY</scope>
    <scope>SUBCELLULAR LOCATION</scope>
    <scope>VARIANT BRGDA2 VAL-280</scope>
    <scope>CHARACTERIZATION OF VARIANT BRGDA2 VAL-280</scope>
</reference>
<dbReference type="EC" id="1.1.1.8" evidence="4"/>
<dbReference type="EMBL" id="D42047">
    <property type="protein sequence ID" value="BAA07648.1"/>
    <property type="status" value="ALT_INIT"/>
    <property type="molecule type" value="mRNA"/>
</dbReference>
<dbReference type="EMBL" id="AK292808">
    <property type="protein sequence ID" value="BAF85497.1"/>
    <property type="molecule type" value="mRNA"/>
</dbReference>
<dbReference type="EMBL" id="CH471055">
    <property type="protein sequence ID" value="EAW64422.1"/>
    <property type="molecule type" value="Genomic_DNA"/>
</dbReference>
<dbReference type="EMBL" id="BC006168">
    <property type="protein sequence ID" value="AAH06168.1"/>
    <property type="molecule type" value="mRNA"/>
</dbReference>
<dbReference type="EMBL" id="BC028726">
    <property type="protein sequence ID" value="AAH28726.1"/>
    <property type="molecule type" value="mRNA"/>
</dbReference>
<dbReference type="CCDS" id="CCDS33729.1"/>
<dbReference type="RefSeq" id="NP_055956.1">
    <property type="nucleotide sequence ID" value="NM_015141.4"/>
</dbReference>
<dbReference type="PDB" id="2PLA">
    <property type="method" value="X-ray"/>
    <property type="resolution" value="2.51 A"/>
    <property type="chains" value="A/B=1-349"/>
</dbReference>
<dbReference type="PDBsum" id="2PLA"/>
<dbReference type="SMR" id="Q8N335"/>
<dbReference type="BioGRID" id="116783">
    <property type="interactions" value="65"/>
</dbReference>
<dbReference type="FunCoup" id="Q8N335">
    <property type="interactions" value="1314"/>
</dbReference>
<dbReference type="IntAct" id="Q8N335">
    <property type="interactions" value="36"/>
</dbReference>
<dbReference type="MINT" id="Q8N335"/>
<dbReference type="STRING" id="9606.ENSP00000282541"/>
<dbReference type="SwissLipids" id="SLP:000000146"/>
<dbReference type="GlyGen" id="Q8N335">
    <property type="glycosylation" value="1 site, 1 O-linked glycan (1 site)"/>
</dbReference>
<dbReference type="iPTMnet" id="Q8N335"/>
<dbReference type="MetOSite" id="Q8N335"/>
<dbReference type="PhosphoSitePlus" id="Q8N335"/>
<dbReference type="SwissPalm" id="Q8N335"/>
<dbReference type="BioMuta" id="GPD1L"/>
<dbReference type="DMDM" id="74750945"/>
<dbReference type="jPOST" id="Q8N335"/>
<dbReference type="MassIVE" id="Q8N335"/>
<dbReference type="PaxDb" id="9606-ENSP00000282541"/>
<dbReference type="PeptideAtlas" id="Q8N335"/>
<dbReference type="ProteomicsDB" id="71759"/>
<dbReference type="Pumba" id="Q8N335"/>
<dbReference type="Antibodypedia" id="27707">
    <property type="antibodies" value="161 antibodies from 25 providers"/>
</dbReference>
<dbReference type="DNASU" id="23171"/>
<dbReference type="Ensembl" id="ENST00000282541.10">
    <property type="protein sequence ID" value="ENSP00000282541.6"/>
    <property type="gene ID" value="ENSG00000152642.11"/>
</dbReference>
<dbReference type="GeneID" id="23171"/>
<dbReference type="KEGG" id="hsa:23171"/>
<dbReference type="MANE-Select" id="ENST00000282541.10">
    <property type="protein sequence ID" value="ENSP00000282541.6"/>
    <property type="RefSeq nucleotide sequence ID" value="NM_015141.4"/>
    <property type="RefSeq protein sequence ID" value="NP_055956.1"/>
</dbReference>
<dbReference type="UCSC" id="uc003cew.4">
    <property type="organism name" value="human"/>
</dbReference>
<dbReference type="AGR" id="HGNC:28956"/>
<dbReference type="CTD" id="23171"/>
<dbReference type="DisGeNET" id="23171"/>
<dbReference type="GeneCards" id="GPD1L"/>
<dbReference type="GeneReviews" id="GPD1L"/>
<dbReference type="HGNC" id="HGNC:28956">
    <property type="gene designation" value="GPD1L"/>
</dbReference>
<dbReference type="HPA" id="ENSG00000152642">
    <property type="expression patterns" value="Tissue enhanced (skeletal muscle, tongue)"/>
</dbReference>
<dbReference type="MalaCards" id="GPD1L"/>
<dbReference type="MIM" id="611777">
    <property type="type" value="phenotype"/>
</dbReference>
<dbReference type="MIM" id="611778">
    <property type="type" value="gene"/>
</dbReference>
<dbReference type="neXtProt" id="NX_Q8N335"/>
<dbReference type="OpenTargets" id="ENSG00000152642"/>
<dbReference type="Orphanet" id="130">
    <property type="disease" value="Brugada syndrome"/>
</dbReference>
<dbReference type="PharmGKB" id="PA134986345"/>
<dbReference type="VEuPathDB" id="HostDB:ENSG00000152642"/>
<dbReference type="eggNOG" id="KOG2711">
    <property type="taxonomic scope" value="Eukaryota"/>
</dbReference>
<dbReference type="GeneTree" id="ENSGT00390000003114"/>
<dbReference type="HOGENOM" id="CLU_033449_2_2_1"/>
<dbReference type="InParanoid" id="Q8N335"/>
<dbReference type="OMA" id="YDTPPMD"/>
<dbReference type="OrthoDB" id="10263760at2759"/>
<dbReference type="PAN-GO" id="Q8N335">
    <property type="GO annotations" value="1 GO annotation based on evolutionary models"/>
</dbReference>
<dbReference type="PhylomeDB" id="Q8N335"/>
<dbReference type="TreeFam" id="TF300836"/>
<dbReference type="PathwayCommons" id="Q8N335"/>
<dbReference type="Reactome" id="R-HSA-1483166">
    <property type="pathway name" value="Synthesis of PA"/>
</dbReference>
<dbReference type="SignaLink" id="Q8N335"/>
<dbReference type="BioGRID-ORCS" id="23171">
    <property type="hits" value="10 hits in 1152 CRISPR screens"/>
</dbReference>
<dbReference type="ChiTaRS" id="GPD1L">
    <property type="organism name" value="human"/>
</dbReference>
<dbReference type="EvolutionaryTrace" id="Q8N335"/>
<dbReference type="GenomeRNAi" id="23171"/>
<dbReference type="Pharos" id="Q8N335">
    <property type="development level" value="Tbio"/>
</dbReference>
<dbReference type="PRO" id="PR:Q8N335"/>
<dbReference type="Proteomes" id="UP000005640">
    <property type="component" value="Chromosome 3"/>
</dbReference>
<dbReference type="RNAct" id="Q8N335">
    <property type="molecule type" value="protein"/>
</dbReference>
<dbReference type="Bgee" id="ENSG00000152642">
    <property type="expression patterns" value="Expressed in biceps brachii and 209 other cell types or tissues"/>
</dbReference>
<dbReference type="ExpressionAtlas" id="Q8N335">
    <property type="expression patterns" value="baseline and differential"/>
</dbReference>
<dbReference type="GO" id="GO:0005829">
    <property type="term" value="C:cytosol"/>
    <property type="evidence" value="ECO:0000318"/>
    <property type="project" value="GO_Central"/>
</dbReference>
<dbReference type="GO" id="GO:0070062">
    <property type="term" value="C:extracellular exosome"/>
    <property type="evidence" value="ECO:0007005"/>
    <property type="project" value="UniProtKB"/>
</dbReference>
<dbReference type="GO" id="GO:0005886">
    <property type="term" value="C:plasma membrane"/>
    <property type="evidence" value="ECO:0000314"/>
    <property type="project" value="BHF-UCL"/>
</dbReference>
<dbReference type="GO" id="GO:0141152">
    <property type="term" value="F:glycerol-3-phosphate dehydrogenase (NAD+) activity"/>
    <property type="evidence" value="ECO:0007669"/>
    <property type="project" value="UniProtKB-EC"/>
</dbReference>
<dbReference type="GO" id="GO:0051287">
    <property type="term" value="F:NAD binding"/>
    <property type="evidence" value="ECO:0007669"/>
    <property type="project" value="InterPro"/>
</dbReference>
<dbReference type="GO" id="GO:0042803">
    <property type="term" value="F:protein homodimerization activity"/>
    <property type="evidence" value="ECO:0007669"/>
    <property type="project" value="InterPro"/>
</dbReference>
<dbReference type="GO" id="GO:0017080">
    <property type="term" value="F:sodium channel regulator activity"/>
    <property type="evidence" value="ECO:0000315"/>
    <property type="project" value="BHF-UCL"/>
</dbReference>
<dbReference type="GO" id="GO:0044325">
    <property type="term" value="F:transmembrane transporter binding"/>
    <property type="evidence" value="ECO:0000353"/>
    <property type="project" value="BHF-UCL"/>
</dbReference>
<dbReference type="GO" id="GO:0005975">
    <property type="term" value="P:carbohydrate metabolic process"/>
    <property type="evidence" value="ECO:0007669"/>
    <property type="project" value="InterPro"/>
</dbReference>
<dbReference type="GO" id="GO:0046168">
    <property type="term" value="P:glycerol-3-phosphate catabolic process"/>
    <property type="evidence" value="ECO:0007669"/>
    <property type="project" value="InterPro"/>
</dbReference>
<dbReference type="GO" id="GO:0019674">
    <property type="term" value="P:NAD metabolic process"/>
    <property type="evidence" value="ECO:0000315"/>
    <property type="project" value="BHF-UCL"/>
</dbReference>
<dbReference type="GO" id="GO:0006734">
    <property type="term" value="P:NADH metabolic process"/>
    <property type="evidence" value="ECO:0007669"/>
    <property type="project" value="Ensembl"/>
</dbReference>
<dbReference type="GO" id="GO:2000010">
    <property type="term" value="P:positive regulation of protein localization to cell surface"/>
    <property type="evidence" value="ECO:0000315"/>
    <property type="project" value="BHF-UCL"/>
</dbReference>
<dbReference type="GO" id="GO:0010765">
    <property type="term" value="P:positive regulation of sodium ion transport"/>
    <property type="evidence" value="ECO:0000315"/>
    <property type="project" value="BHF-UCL"/>
</dbReference>
<dbReference type="GO" id="GO:0002027">
    <property type="term" value="P:regulation of heart rate"/>
    <property type="evidence" value="ECO:0000315"/>
    <property type="project" value="BHF-UCL"/>
</dbReference>
<dbReference type="GO" id="GO:0060373">
    <property type="term" value="P:regulation of ventricular cardiac muscle cell membrane depolarization"/>
    <property type="evidence" value="ECO:0000315"/>
    <property type="project" value="BHF-UCL"/>
</dbReference>
<dbReference type="GO" id="GO:0086005">
    <property type="term" value="P:ventricular cardiac muscle cell action potential"/>
    <property type="evidence" value="ECO:0000315"/>
    <property type="project" value="BHF-UCL"/>
</dbReference>
<dbReference type="FunFam" id="3.40.50.720:FF:000088">
    <property type="entry name" value="Glycerol-3-phosphate dehydrogenase [NAD(+)]"/>
    <property type="match status" value="1"/>
</dbReference>
<dbReference type="FunFam" id="1.10.1040.10:FF:000084">
    <property type="entry name" value="Glycerol-3-phosphate dehydrogenase [NAD(+)], cytoplasmic"/>
    <property type="match status" value="1"/>
</dbReference>
<dbReference type="Gene3D" id="1.10.1040.10">
    <property type="entry name" value="N-(1-d-carboxylethyl)-l-norvaline Dehydrogenase, domain 2"/>
    <property type="match status" value="1"/>
</dbReference>
<dbReference type="Gene3D" id="3.40.50.720">
    <property type="entry name" value="NAD(P)-binding Rossmann-like Domain"/>
    <property type="match status" value="1"/>
</dbReference>
<dbReference type="InterPro" id="IPR008927">
    <property type="entry name" value="6-PGluconate_DH-like_C_sf"/>
</dbReference>
<dbReference type="InterPro" id="IPR013328">
    <property type="entry name" value="6PGD_dom2"/>
</dbReference>
<dbReference type="InterPro" id="IPR006168">
    <property type="entry name" value="G3P_DH_NAD-dep"/>
</dbReference>
<dbReference type="InterPro" id="IPR006109">
    <property type="entry name" value="G3P_DH_NAD-dep_C"/>
</dbReference>
<dbReference type="InterPro" id="IPR017751">
    <property type="entry name" value="G3P_DH_NAD-dep_euk"/>
</dbReference>
<dbReference type="InterPro" id="IPR011128">
    <property type="entry name" value="G3P_DH_NAD-dep_N"/>
</dbReference>
<dbReference type="InterPro" id="IPR036291">
    <property type="entry name" value="NAD(P)-bd_dom_sf"/>
</dbReference>
<dbReference type="NCBIfam" id="TIGR03376">
    <property type="entry name" value="glycerol3P_DH"/>
    <property type="match status" value="1"/>
</dbReference>
<dbReference type="PANTHER" id="PTHR11728">
    <property type="entry name" value="GLYCEROL-3-PHOSPHATE DEHYDROGENASE"/>
    <property type="match status" value="1"/>
</dbReference>
<dbReference type="PANTHER" id="PTHR11728:SF7">
    <property type="entry name" value="GLYCEROL-3-PHOSPHATE DEHYDROGENASE 1-LIKE PROTEIN"/>
    <property type="match status" value="1"/>
</dbReference>
<dbReference type="Pfam" id="PF07479">
    <property type="entry name" value="NAD_Gly3P_dh_C"/>
    <property type="match status" value="1"/>
</dbReference>
<dbReference type="Pfam" id="PF01210">
    <property type="entry name" value="NAD_Gly3P_dh_N"/>
    <property type="match status" value="1"/>
</dbReference>
<dbReference type="PIRSF" id="PIRSF000114">
    <property type="entry name" value="Glycerol-3-P_dh"/>
    <property type="match status" value="1"/>
</dbReference>
<dbReference type="PRINTS" id="PR00077">
    <property type="entry name" value="GPDHDRGNASE"/>
</dbReference>
<dbReference type="SUPFAM" id="SSF48179">
    <property type="entry name" value="6-phosphogluconate dehydrogenase C-terminal domain-like"/>
    <property type="match status" value="1"/>
</dbReference>
<dbReference type="SUPFAM" id="SSF51735">
    <property type="entry name" value="NAD(P)-binding Rossmann-fold domains"/>
    <property type="match status" value="1"/>
</dbReference>
<comment type="function">
    <text evidence="4 5">Plays a role in regulating cardiac sodium current; decreased enzymatic activity with resulting increased levels of glycerol 3-phosphate activating the DPD1L-dependent SCN5A phosphorylation pathway, may ultimately lead to decreased sodium current; cardiac sodium current may also be reduced due to alterations of NAD(H) balance induced by DPD1L.</text>
</comment>
<comment type="catalytic activity">
    <reaction evidence="4">
        <text>sn-glycerol 3-phosphate + NAD(+) = dihydroxyacetone phosphate + NADH + H(+)</text>
        <dbReference type="Rhea" id="RHEA:11092"/>
        <dbReference type="ChEBI" id="CHEBI:15378"/>
        <dbReference type="ChEBI" id="CHEBI:57540"/>
        <dbReference type="ChEBI" id="CHEBI:57597"/>
        <dbReference type="ChEBI" id="CHEBI:57642"/>
        <dbReference type="ChEBI" id="CHEBI:57945"/>
        <dbReference type="EC" id="1.1.1.8"/>
    </reaction>
    <physiologicalReaction direction="left-to-right" evidence="4">
        <dbReference type="Rhea" id="RHEA:11093"/>
    </physiologicalReaction>
</comment>
<comment type="subunit">
    <text evidence="4 6">Interacts with SCN5A.</text>
</comment>
<comment type="interaction">
    <interactant intactId="EBI-13644267">
        <id>Q8N335</id>
    </interactant>
    <interactant intactId="EBI-18164173">
        <id>Q9P0V8</id>
        <label>SLAMF8</label>
    </interactant>
    <organismsDiffer>false</organismsDiffer>
    <experiments>2</experiments>
</comment>
<comment type="subcellular location">
    <subcellularLocation>
        <location evidence="3">Cytoplasm</location>
    </subcellularLocation>
    <text>Localized to the region of the plasma membrane.</text>
</comment>
<comment type="tissue specificity">
    <text evidence="3">Most highly expressed in heart tissue, with lower levels in the skeletal muscle, kidney, lung and other organs.</text>
</comment>
<comment type="disease" evidence="2 3 4 5">
    <disease id="DI-00203">
        <name>Brugada syndrome 2</name>
        <acronym>BRGDA2</acronym>
        <description>A tachyarrhythmia characterized by right bundle branch block and ST segment elevation on an electrocardiogram (ECG). It can cause the ventricles to beat so fast that the blood is prevented from circulating efficiently in the body. When this situation occurs, the individual will faint and may die in a few minutes if the heart is not reset.</description>
        <dbReference type="MIM" id="611777"/>
    </disease>
    <text>The gene represented in this entry may be involved in disease pathogenesis.</text>
</comment>
<comment type="similarity">
    <text evidence="7">Belongs to the NAD-dependent glycerol-3-phosphate dehydrogenase family.</text>
</comment>
<comment type="sequence caution" evidence="7">
    <conflict type="erroneous initiation">
        <sequence resource="EMBL-CDS" id="BAA07648"/>
    </conflict>
    <text>Extended N-terminus.</text>
</comment>
<name>GPD1L_HUMAN</name>
<organism>
    <name type="scientific">Homo sapiens</name>
    <name type="common">Human</name>
    <dbReference type="NCBI Taxonomy" id="9606"/>
    <lineage>
        <taxon>Eukaryota</taxon>
        <taxon>Metazoa</taxon>
        <taxon>Chordata</taxon>
        <taxon>Craniata</taxon>
        <taxon>Vertebrata</taxon>
        <taxon>Euteleostomi</taxon>
        <taxon>Mammalia</taxon>
        <taxon>Eutheria</taxon>
        <taxon>Euarchontoglires</taxon>
        <taxon>Primates</taxon>
        <taxon>Haplorrhini</taxon>
        <taxon>Catarrhini</taxon>
        <taxon>Hominidae</taxon>
        <taxon>Homo</taxon>
    </lineage>
</organism>
<keyword id="KW-0002">3D-structure</keyword>
<keyword id="KW-0992">Brugada syndrome</keyword>
<keyword id="KW-0963">Cytoplasm</keyword>
<keyword id="KW-0225">Disease variant</keyword>
<keyword id="KW-0520">NAD</keyword>
<keyword id="KW-0560">Oxidoreductase</keyword>
<keyword id="KW-1267">Proteomics identification</keyword>
<keyword id="KW-1185">Reference proteome</keyword>
<feature type="chain" id="PRO_0000286511" description="Glycerol-3-phosphate dehydrogenase 1-like protein">
    <location>
        <begin position="1"/>
        <end position="351"/>
    </location>
</feature>
<feature type="active site" description="Proton acceptor">
    <location>
        <position position="206"/>
    </location>
</feature>
<feature type="binding site" evidence="6">
    <location>
        <begin position="12"/>
        <end position="17"/>
    </location>
    <ligand>
        <name>NAD(+)</name>
        <dbReference type="ChEBI" id="CHEBI:57540"/>
    </ligand>
</feature>
<feature type="binding site" evidence="1">
    <location>
        <position position="122"/>
    </location>
    <ligand>
        <name>substrate</name>
    </ligand>
</feature>
<feature type="binding site" evidence="6">
    <location>
        <position position="155"/>
    </location>
    <ligand>
        <name>NAD(+)</name>
        <dbReference type="ChEBI" id="CHEBI:57540"/>
    </ligand>
</feature>
<feature type="binding site">
    <location>
        <begin position="271"/>
        <end position="272"/>
    </location>
    <ligand>
        <name>substrate</name>
    </ligand>
</feature>
<feature type="binding site" evidence="1">
    <location>
        <position position="271"/>
    </location>
    <ligand>
        <name>NAD(+)</name>
        <dbReference type="ChEBI" id="CHEBI:57540"/>
    </ligand>
</feature>
<feature type="binding site" evidence="6">
    <location>
        <position position="298"/>
    </location>
    <ligand>
        <name>NAD(+)</name>
        <dbReference type="ChEBI" id="CHEBI:57540"/>
    </ligand>
</feature>
<feature type="binding site" evidence="1">
    <location>
        <position position="300"/>
    </location>
    <ligand>
        <name>NAD(+)</name>
        <dbReference type="ChEBI" id="CHEBI:57540"/>
    </ligand>
</feature>
<feature type="sequence variant" id="VAR_044044" description="In BRGDA2; uncertain significance; decreased enzymatic activity and significant reduction of sodium current when coexpressed with SCN5A in HEK cells; dbSNP:rs72552292." evidence="2 4">
    <original>E</original>
    <variation>K</variation>
    <location>
        <position position="83"/>
    </location>
</feature>
<feature type="sequence variant" id="VAR_044045" description="In BRGDA2; uncertain significance; significant reduction of sodium current when coexpressed with SCN5A in HEK cells; dbSNP:rs72552293." evidence="2">
    <original>I</original>
    <variation>V</variation>
    <location>
        <position position="124"/>
    </location>
</feature>
<feature type="sequence variant" id="VAR_032114" description="In dbSNP:rs35447795.">
    <original>L</original>
    <variation>F</variation>
    <location>
        <position position="178"/>
    </location>
</feature>
<feature type="sequence variant" id="VAR_044046" description="In BRGDA2; uncertain significance; significant reduction of sodium current when coexpressed with SCN5A in HEK cells; dbSNP:rs72552294." evidence="2">
    <original>R</original>
    <variation>C</variation>
    <location>
        <position position="273"/>
    </location>
</feature>
<feature type="sequence variant" id="VAR_044047" description="In BRGDA2; uncertain significance; decreased enzymatic activity; affects SCN5A membrane expression; reduction of sodium current when coexpressed with SCN5A in HEK cells; dbSNP:rs72552291." evidence="3 4 5">
    <original>A</original>
    <variation>V</variation>
    <location>
        <position position="280"/>
    </location>
</feature>
<feature type="strand" evidence="9">
    <location>
        <begin position="8"/>
        <end position="11"/>
    </location>
</feature>
<feature type="helix" evidence="9">
    <location>
        <begin position="15"/>
        <end position="28"/>
    </location>
</feature>
<feature type="strand" evidence="9">
    <location>
        <begin position="38"/>
        <end position="41"/>
    </location>
</feature>
<feature type="helix" evidence="9">
    <location>
        <begin position="52"/>
        <end position="59"/>
    </location>
</feature>
<feature type="turn" evidence="9">
    <location>
        <begin position="63"/>
        <end position="65"/>
    </location>
</feature>
<feature type="strand" evidence="9">
    <location>
        <begin position="75"/>
        <end position="79"/>
    </location>
</feature>
<feature type="helix" evidence="9">
    <location>
        <begin position="81"/>
        <end position="85"/>
    </location>
</feature>
<feature type="strand" evidence="9">
    <location>
        <begin position="89"/>
        <end position="93"/>
    </location>
</feature>
<feature type="helix" evidence="9">
    <location>
        <begin position="97"/>
        <end position="99"/>
    </location>
</feature>
<feature type="helix" evidence="9">
    <location>
        <begin position="100"/>
        <end position="107"/>
    </location>
</feature>
<feature type="strand" evidence="9">
    <location>
        <begin position="116"/>
        <end position="119"/>
    </location>
</feature>
<feature type="strand" evidence="9">
    <location>
        <begin position="124"/>
        <end position="127"/>
    </location>
</feature>
<feature type="strand" evidence="9">
    <location>
        <begin position="130"/>
        <end position="133"/>
    </location>
</feature>
<feature type="helix" evidence="9">
    <location>
        <begin position="134"/>
        <end position="142"/>
    </location>
</feature>
<feature type="strand" evidence="9">
    <location>
        <begin position="144"/>
        <end position="152"/>
    </location>
</feature>
<feature type="helix" evidence="9">
    <location>
        <begin position="155"/>
        <end position="159"/>
    </location>
</feature>
<feature type="strand" evidence="9">
    <location>
        <begin position="164"/>
        <end position="169"/>
    </location>
</feature>
<feature type="helix" evidence="9">
    <location>
        <begin position="173"/>
        <end position="183"/>
    </location>
</feature>
<feature type="strand" evidence="9">
    <location>
        <begin position="188"/>
        <end position="194"/>
    </location>
</feature>
<feature type="helix" evidence="9">
    <location>
        <begin position="196"/>
        <end position="218"/>
    </location>
</feature>
<feature type="helix" evidence="9">
    <location>
        <begin position="223"/>
        <end position="244"/>
    </location>
</feature>
<feature type="strand" evidence="9">
    <location>
        <begin position="245"/>
        <end position="247"/>
    </location>
</feature>
<feature type="helix" evidence="9">
    <location>
        <begin position="251"/>
        <end position="254"/>
    </location>
</feature>
<feature type="turn" evidence="9">
    <location>
        <begin position="257"/>
        <end position="259"/>
    </location>
</feature>
<feature type="helix" evidence="9">
    <location>
        <begin position="260"/>
        <end position="269"/>
    </location>
</feature>
<feature type="helix" evidence="9">
    <location>
        <begin position="271"/>
        <end position="282"/>
    </location>
</feature>
<feature type="helix" evidence="9">
    <location>
        <begin position="286"/>
        <end position="294"/>
    </location>
</feature>
<feature type="helix" evidence="9">
    <location>
        <begin position="301"/>
        <end position="315"/>
    </location>
</feature>
<feature type="helix" evidence="9">
    <location>
        <begin position="318"/>
        <end position="320"/>
    </location>
</feature>
<feature type="helix" evidence="9">
    <location>
        <begin position="322"/>
        <end position="332"/>
    </location>
</feature>
<feature type="helix" evidence="9">
    <location>
        <begin position="339"/>
        <end position="345"/>
    </location>
</feature>